<proteinExistence type="inferred from homology"/>
<comment type="function">
    <text evidence="1">Catalyzes the transfer of a ribosyl phosphate group from 5-phosphoribose 1-diphosphate to orotate, leading to the formation of orotidine monophosphate (OMP).</text>
</comment>
<comment type="catalytic activity">
    <reaction evidence="1">
        <text>orotidine 5'-phosphate + diphosphate = orotate + 5-phospho-alpha-D-ribose 1-diphosphate</text>
        <dbReference type="Rhea" id="RHEA:10380"/>
        <dbReference type="ChEBI" id="CHEBI:30839"/>
        <dbReference type="ChEBI" id="CHEBI:33019"/>
        <dbReference type="ChEBI" id="CHEBI:57538"/>
        <dbReference type="ChEBI" id="CHEBI:58017"/>
        <dbReference type="EC" id="2.4.2.10"/>
    </reaction>
</comment>
<comment type="cofactor">
    <cofactor evidence="1">
        <name>Mg(2+)</name>
        <dbReference type="ChEBI" id="CHEBI:18420"/>
    </cofactor>
</comment>
<comment type="pathway">
    <text evidence="1">Pyrimidine metabolism; UMP biosynthesis via de novo pathway; UMP from orotate: step 1/2.</text>
</comment>
<comment type="subunit">
    <text evidence="1">Homodimer.</text>
</comment>
<comment type="similarity">
    <text evidence="1">Belongs to the purine/pyrimidine phosphoribosyltransferase family. PyrE subfamily.</text>
</comment>
<name>PYRE_MYCBP</name>
<organism>
    <name type="scientific">Mycobacterium bovis (strain BCG / Pasteur 1173P2)</name>
    <dbReference type="NCBI Taxonomy" id="410289"/>
    <lineage>
        <taxon>Bacteria</taxon>
        <taxon>Bacillati</taxon>
        <taxon>Actinomycetota</taxon>
        <taxon>Actinomycetes</taxon>
        <taxon>Mycobacteriales</taxon>
        <taxon>Mycobacteriaceae</taxon>
        <taxon>Mycobacterium</taxon>
        <taxon>Mycobacterium tuberculosis complex</taxon>
    </lineage>
</organism>
<gene>
    <name evidence="1" type="primary">pyrE</name>
    <name type="ordered locus">BCG_0420c</name>
</gene>
<feature type="chain" id="PRO_1000066257" description="Orotate phosphoribosyltransferase">
    <location>
        <begin position="1"/>
        <end position="179"/>
    </location>
</feature>
<feature type="binding site" evidence="1">
    <location>
        <position position="94"/>
    </location>
    <ligand>
        <name>5-phospho-alpha-D-ribose 1-diphosphate</name>
        <dbReference type="ChEBI" id="CHEBI:58017"/>
        <note>ligand shared between dimeric partners</note>
    </ligand>
</feature>
<feature type="binding site" description="in other chain" evidence="1">
    <location>
        <position position="95"/>
    </location>
    <ligand>
        <name>5-phospho-alpha-D-ribose 1-diphosphate</name>
        <dbReference type="ChEBI" id="CHEBI:58017"/>
        <note>ligand shared between dimeric partners</note>
    </ligand>
</feature>
<feature type="binding site" evidence="1">
    <location>
        <position position="98"/>
    </location>
    <ligand>
        <name>5-phospho-alpha-D-ribose 1-diphosphate</name>
        <dbReference type="ChEBI" id="CHEBI:58017"/>
        <note>ligand shared between dimeric partners</note>
    </ligand>
</feature>
<feature type="binding site" evidence="1">
    <location>
        <position position="100"/>
    </location>
    <ligand>
        <name>5-phospho-alpha-D-ribose 1-diphosphate</name>
        <dbReference type="ChEBI" id="CHEBI:58017"/>
        <note>ligand shared between dimeric partners</note>
    </ligand>
</feature>
<feature type="binding site" description="in other chain" evidence="1">
    <location>
        <begin position="120"/>
        <end position="128"/>
    </location>
    <ligand>
        <name>5-phospho-alpha-D-ribose 1-diphosphate</name>
        <dbReference type="ChEBI" id="CHEBI:58017"/>
        <note>ligand shared between dimeric partners</note>
    </ligand>
</feature>
<feature type="binding site" evidence="1">
    <location>
        <position position="124"/>
    </location>
    <ligand>
        <name>orotate</name>
        <dbReference type="ChEBI" id="CHEBI:30839"/>
    </ligand>
</feature>
<feature type="binding site" evidence="1">
    <location>
        <position position="152"/>
    </location>
    <ligand>
        <name>orotate</name>
        <dbReference type="ChEBI" id="CHEBI:30839"/>
    </ligand>
</feature>
<protein>
    <recommendedName>
        <fullName evidence="1">Orotate phosphoribosyltransferase</fullName>
        <shortName evidence="1">OPRT</shortName>
        <shortName evidence="1">OPRTase</shortName>
        <ecNumber evidence="1">2.4.2.10</ecNumber>
    </recommendedName>
</protein>
<keyword id="KW-0328">Glycosyltransferase</keyword>
<keyword id="KW-0460">Magnesium</keyword>
<keyword id="KW-0665">Pyrimidine biosynthesis</keyword>
<keyword id="KW-0808">Transferase</keyword>
<sequence>MAGPDRAELAELVRRLSVVHGRVTLSSGREADYYVDLRRATLHHRASALIGRLMRELTADWDYSVVGGLTLGADPVATAIMHAPGRPIDAFVVRKSAKAHGMQRLIEGSEVTGQRVLVVEDTSTTGNSALTAVHAVQDVGGEVVGVATVVDRATGAAEAIEAEGLRYRSVLGLADLGLD</sequence>
<accession>A1KFK3</accession>
<evidence type="ECO:0000255" key="1">
    <source>
        <dbReference type="HAMAP-Rule" id="MF_01208"/>
    </source>
</evidence>
<dbReference type="EC" id="2.4.2.10" evidence="1"/>
<dbReference type="EMBL" id="AM408590">
    <property type="protein sequence ID" value="CAL70405.1"/>
    <property type="molecule type" value="Genomic_DNA"/>
</dbReference>
<dbReference type="RefSeq" id="WP_003401894.1">
    <property type="nucleotide sequence ID" value="NC_008769.1"/>
</dbReference>
<dbReference type="SMR" id="A1KFK3"/>
<dbReference type="GeneID" id="45424348"/>
<dbReference type="KEGG" id="mbb:BCG_0420c"/>
<dbReference type="HOGENOM" id="CLU_074878_2_1_11"/>
<dbReference type="UniPathway" id="UPA00070">
    <property type="reaction ID" value="UER00119"/>
</dbReference>
<dbReference type="Proteomes" id="UP000001472">
    <property type="component" value="Chromosome"/>
</dbReference>
<dbReference type="GO" id="GO:0000287">
    <property type="term" value="F:magnesium ion binding"/>
    <property type="evidence" value="ECO:0007669"/>
    <property type="project" value="UniProtKB-UniRule"/>
</dbReference>
<dbReference type="GO" id="GO:0004588">
    <property type="term" value="F:orotate phosphoribosyltransferase activity"/>
    <property type="evidence" value="ECO:0007669"/>
    <property type="project" value="UniProtKB-UniRule"/>
</dbReference>
<dbReference type="GO" id="GO:0044205">
    <property type="term" value="P:'de novo' UMP biosynthetic process"/>
    <property type="evidence" value="ECO:0007669"/>
    <property type="project" value="UniProtKB-UniRule"/>
</dbReference>
<dbReference type="GO" id="GO:0019856">
    <property type="term" value="P:pyrimidine nucleobase biosynthetic process"/>
    <property type="evidence" value="ECO:0007669"/>
    <property type="project" value="TreeGrafter"/>
</dbReference>
<dbReference type="CDD" id="cd06223">
    <property type="entry name" value="PRTases_typeI"/>
    <property type="match status" value="1"/>
</dbReference>
<dbReference type="FunFam" id="3.40.50.2020:FF:000029">
    <property type="entry name" value="Orotate phosphoribosyltransferase"/>
    <property type="match status" value="1"/>
</dbReference>
<dbReference type="Gene3D" id="3.40.50.2020">
    <property type="match status" value="1"/>
</dbReference>
<dbReference type="HAMAP" id="MF_01208">
    <property type="entry name" value="PyrE"/>
    <property type="match status" value="1"/>
</dbReference>
<dbReference type="InterPro" id="IPR023031">
    <property type="entry name" value="OPRT"/>
</dbReference>
<dbReference type="InterPro" id="IPR004467">
    <property type="entry name" value="Or_phspho_trans_dom"/>
</dbReference>
<dbReference type="InterPro" id="IPR000836">
    <property type="entry name" value="PRibTrfase_dom"/>
</dbReference>
<dbReference type="InterPro" id="IPR029057">
    <property type="entry name" value="PRTase-like"/>
</dbReference>
<dbReference type="NCBIfam" id="TIGR00336">
    <property type="entry name" value="pyrE"/>
    <property type="match status" value="1"/>
</dbReference>
<dbReference type="PANTHER" id="PTHR19278">
    <property type="entry name" value="OROTATE PHOSPHORIBOSYLTRANSFERASE"/>
    <property type="match status" value="1"/>
</dbReference>
<dbReference type="PANTHER" id="PTHR19278:SF9">
    <property type="entry name" value="URIDINE 5'-MONOPHOSPHATE SYNTHASE"/>
    <property type="match status" value="1"/>
</dbReference>
<dbReference type="Pfam" id="PF00156">
    <property type="entry name" value="Pribosyltran"/>
    <property type="match status" value="1"/>
</dbReference>
<dbReference type="SUPFAM" id="SSF53271">
    <property type="entry name" value="PRTase-like"/>
    <property type="match status" value="1"/>
</dbReference>
<reference key="1">
    <citation type="journal article" date="2007" name="Proc. Natl. Acad. Sci. U.S.A.">
        <title>Genome plasticity of BCG and impact on vaccine efficacy.</title>
        <authorList>
            <person name="Brosch R."/>
            <person name="Gordon S.V."/>
            <person name="Garnier T."/>
            <person name="Eiglmeier K."/>
            <person name="Frigui W."/>
            <person name="Valenti P."/>
            <person name="Dos Santos S."/>
            <person name="Duthoy S."/>
            <person name="Lacroix C."/>
            <person name="Garcia-Pelayo C."/>
            <person name="Inwald J.K."/>
            <person name="Golby P."/>
            <person name="Garcia J.N."/>
            <person name="Hewinson R.G."/>
            <person name="Behr M.A."/>
            <person name="Quail M.A."/>
            <person name="Churcher C."/>
            <person name="Barrell B.G."/>
            <person name="Parkhill J."/>
            <person name="Cole S.T."/>
        </authorList>
    </citation>
    <scope>NUCLEOTIDE SEQUENCE [LARGE SCALE GENOMIC DNA]</scope>
    <source>
        <strain>BCG / Pasteur 1173P2</strain>
    </source>
</reference>